<keyword id="KW-0342">GTP-binding</keyword>
<keyword id="KW-0378">Hydrolase</keyword>
<keyword id="KW-0472">Membrane</keyword>
<keyword id="KW-0496">Mitochondrion</keyword>
<keyword id="KW-0999">Mitochondrion inner membrane</keyword>
<keyword id="KW-0547">Nucleotide-binding</keyword>
<keyword id="KW-0648">Protein biosynthesis</keyword>
<keyword id="KW-1185">Reference proteome</keyword>
<gene>
    <name type="ORF">PVX_099025</name>
</gene>
<proteinExistence type="inferred from homology"/>
<feature type="chain" id="PRO_0000402854" description="Translation factor GUF1 homolog, mitochondrial">
    <location>
        <begin position="1"/>
        <end position="910"/>
    </location>
</feature>
<feature type="domain" description="tr-type G">
    <location>
        <begin position="189"/>
        <end position="366"/>
    </location>
</feature>
<feature type="region of interest" description="Disordered" evidence="2">
    <location>
        <begin position="126"/>
        <end position="188"/>
    </location>
</feature>
<feature type="region of interest" description="Disordered" evidence="2">
    <location>
        <begin position="639"/>
        <end position="683"/>
    </location>
</feature>
<feature type="compositionally biased region" description="Low complexity" evidence="2">
    <location>
        <begin position="646"/>
        <end position="667"/>
    </location>
</feature>
<feature type="binding site" evidence="1">
    <location>
        <begin position="198"/>
        <end position="205"/>
    </location>
    <ligand>
        <name>GTP</name>
        <dbReference type="ChEBI" id="CHEBI:37565"/>
    </ligand>
</feature>
<feature type="binding site" evidence="1">
    <location>
        <begin position="259"/>
        <end position="263"/>
    </location>
    <ligand>
        <name>GTP</name>
        <dbReference type="ChEBI" id="CHEBI:37565"/>
    </ligand>
</feature>
<feature type="binding site" evidence="1">
    <location>
        <begin position="313"/>
        <end position="316"/>
    </location>
    <ligand>
        <name>GTP</name>
        <dbReference type="ChEBI" id="CHEBI:37565"/>
    </ligand>
</feature>
<name>GUF1_PLAVS</name>
<protein>
    <recommendedName>
        <fullName evidence="1">Translation factor GUF1 homolog, mitochondrial</fullName>
        <ecNumber>3.6.5.-</ecNumber>
    </recommendedName>
    <alternativeName>
        <fullName evidence="1">Elongation factor 4 homolog</fullName>
        <shortName evidence="1">EF-4</shortName>
    </alternativeName>
    <alternativeName>
        <fullName evidence="1">GTPase GUF1 homolog</fullName>
    </alternativeName>
    <alternativeName>
        <fullName evidence="1">Ribosomal back-translocase</fullName>
    </alternativeName>
</protein>
<organism>
    <name type="scientific">Plasmodium vivax (strain Salvador I)</name>
    <dbReference type="NCBI Taxonomy" id="126793"/>
    <lineage>
        <taxon>Eukaryota</taxon>
        <taxon>Sar</taxon>
        <taxon>Alveolata</taxon>
        <taxon>Apicomplexa</taxon>
        <taxon>Aconoidasida</taxon>
        <taxon>Haemosporida</taxon>
        <taxon>Plasmodiidae</taxon>
        <taxon>Plasmodium</taxon>
        <taxon>Plasmodium (Plasmodium)</taxon>
    </lineage>
</organism>
<dbReference type="EC" id="3.6.5.-"/>
<dbReference type="EMBL" id="AAKM01000007">
    <property type="protein sequence ID" value="EDL44927.1"/>
    <property type="molecule type" value="Genomic_DNA"/>
</dbReference>
<dbReference type="RefSeq" id="XP_001614654.1">
    <property type="nucleotide sequence ID" value="XM_001614604.1"/>
</dbReference>
<dbReference type="SMR" id="A5K6I6"/>
<dbReference type="FunCoup" id="A5K6I6">
    <property type="interactions" value="260"/>
</dbReference>
<dbReference type="STRING" id="126793.A5K6I6"/>
<dbReference type="EnsemblProtists" id="EDL44927">
    <property type="protein sequence ID" value="EDL44927"/>
    <property type="gene ID" value="PVX_099025"/>
</dbReference>
<dbReference type="GeneID" id="5473945"/>
<dbReference type="KEGG" id="pvx:PVX_099025"/>
<dbReference type="VEuPathDB" id="PlasmoDB:PVX_099025"/>
<dbReference type="InParanoid" id="A5K6I6"/>
<dbReference type="OMA" id="QVKCDEN"/>
<dbReference type="PhylomeDB" id="A5K6I6"/>
<dbReference type="Proteomes" id="UP000008333">
    <property type="component" value="Chromosome 7"/>
</dbReference>
<dbReference type="GO" id="GO:0005743">
    <property type="term" value="C:mitochondrial inner membrane"/>
    <property type="evidence" value="ECO:0007669"/>
    <property type="project" value="UniProtKB-SubCell"/>
</dbReference>
<dbReference type="GO" id="GO:0005759">
    <property type="term" value="C:mitochondrial matrix"/>
    <property type="evidence" value="ECO:0007669"/>
    <property type="project" value="UniProtKB-UniRule"/>
</dbReference>
<dbReference type="GO" id="GO:0005525">
    <property type="term" value="F:GTP binding"/>
    <property type="evidence" value="ECO:0007669"/>
    <property type="project" value="UniProtKB-UniRule"/>
</dbReference>
<dbReference type="GO" id="GO:0003924">
    <property type="term" value="F:GTPase activity"/>
    <property type="evidence" value="ECO:0007669"/>
    <property type="project" value="UniProtKB-UniRule"/>
</dbReference>
<dbReference type="GO" id="GO:0043022">
    <property type="term" value="F:ribosome binding"/>
    <property type="evidence" value="ECO:0007669"/>
    <property type="project" value="UniProtKB-UniRule"/>
</dbReference>
<dbReference type="GO" id="GO:0045727">
    <property type="term" value="P:positive regulation of translation"/>
    <property type="evidence" value="ECO:0007669"/>
    <property type="project" value="UniProtKB-UniRule"/>
</dbReference>
<dbReference type="GO" id="GO:0006412">
    <property type="term" value="P:translation"/>
    <property type="evidence" value="ECO:0007669"/>
    <property type="project" value="UniProtKB-KW"/>
</dbReference>
<dbReference type="CDD" id="cd03709">
    <property type="entry name" value="lepA_C"/>
    <property type="match status" value="1"/>
</dbReference>
<dbReference type="Gene3D" id="3.30.70.240">
    <property type="match status" value="1"/>
</dbReference>
<dbReference type="Gene3D" id="3.30.70.2570">
    <property type="entry name" value="Elongation factor 4, C-terminal domain"/>
    <property type="match status" value="1"/>
</dbReference>
<dbReference type="Gene3D" id="3.30.70.870">
    <property type="entry name" value="Elongation Factor G (Translational Gtpase), domain 3"/>
    <property type="match status" value="1"/>
</dbReference>
<dbReference type="Gene3D" id="3.40.50.300">
    <property type="entry name" value="P-loop containing nucleotide triphosphate hydrolases"/>
    <property type="match status" value="1"/>
</dbReference>
<dbReference type="Gene3D" id="2.40.30.10">
    <property type="entry name" value="Translation factors"/>
    <property type="match status" value="1"/>
</dbReference>
<dbReference type="HAMAP" id="MF_00071">
    <property type="entry name" value="LepA"/>
    <property type="match status" value="1"/>
</dbReference>
<dbReference type="InterPro" id="IPR006297">
    <property type="entry name" value="EF-4"/>
</dbReference>
<dbReference type="InterPro" id="IPR041095">
    <property type="entry name" value="EFG_II"/>
</dbReference>
<dbReference type="InterPro" id="IPR035647">
    <property type="entry name" value="EFG_III/V"/>
</dbReference>
<dbReference type="InterPro" id="IPR000640">
    <property type="entry name" value="EFG_V-like"/>
</dbReference>
<dbReference type="InterPro" id="IPR038363">
    <property type="entry name" value="LepA_C_sf"/>
</dbReference>
<dbReference type="InterPro" id="IPR013842">
    <property type="entry name" value="LepA_CTD"/>
</dbReference>
<dbReference type="InterPro" id="IPR035654">
    <property type="entry name" value="LepA_IV"/>
</dbReference>
<dbReference type="InterPro" id="IPR027417">
    <property type="entry name" value="P-loop_NTPase"/>
</dbReference>
<dbReference type="InterPro" id="IPR005225">
    <property type="entry name" value="Small_GTP-bd"/>
</dbReference>
<dbReference type="InterPro" id="IPR000795">
    <property type="entry name" value="T_Tr_GTP-bd_dom"/>
</dbReference>
<dbReference type="InterPro" id="IPR009000">
    <property type="entry name" value="Transl_B-barrel_sf"/>
</dbReference>
<dbReference type="NCBIfam" id="TIGR00231">
    <property type="entry name" value="small_GTP"/>
    <property type="match status" value="1"/>
</dbReference>
<dbReference type="PANTHER" id="PTHR43512:SF4">
    <property type="entry name" value="TRANSLATION FACTOR GUF1 HOMOLOG, CHLOROPLASTIC"/>
    <property type="match status" value="1"/>
</dbReference>
<dbReference type="PANTHER" id="PTHR43512">
    <property type="entry name" value="TRANSLATION FACTOR GUF1-RELATED"/>
    <property type="match status" value="1"/>
</dbReference>
<dbReference type="Pfam" id="PF00679">
    <property type="entry name" value="EFG_C"/>
    <property type="match status" value="1"/>
</dbReference>
<dbReference type="Pfam" id="PF14492">
    <property type="entry name" value="EFG_III"/>
    <property type="match status" value="1"/>
</dbReference>
<dbReference type="Pfam" id="PF00009">
    <property type="entry name" value="GTP_EFTU"/>
    <property type="match status" value="1"/>
</dbReference>
<dbReference type="Pfam" id="PF06421">
    <property type="entry name" value="LepA_C"/>
    <property type="match status" value="1"/>
</dbReference>
<dbReference type="PRINTS" id="PR00315">
    <property type="entry name" value="ELONGATNFCT"/>
</dbReference>
<dbReference type="SUPFAM" id="SSF54980">
    <property type="entry name" value="EF-G C-terminal domain-like"/>
    <property type="match status" value="2"/>
</dbReference>
<dbReference type="SUPFAM" id="SSF52540">
    <property type="entry name" value="P-loop containing nucleoside triphosphate hydrolases"/>
    <property type="match status" value="1"/>
</dbReference>
<dbReference type="SUPFAM" id="SSF50447">
    <property type="entry name" value="Translation proteins"/>
    <property type="match status" value="1"/>
</dbReference>
<dbReference type="PROSITE" id="PS51722">
    <property type="entry name" value="G_TR_2"/>
    <property type="match status" value="1"/>
</dbReference>
<evidence type="ECO:0000255" key="1">
    <source>
        <dbReference type="HAMAP-Rule" id="MF_03137"/>
    </source>
</evidence>
<evidence type="ECO:0000256" key="2">
    <source>
        <dbReference type="SAM" id="MobiDB-lite"/>
    </source>
</evidence>
<evidence type="ECO:0000305" key="3"/>
<accession>A5K6I6</accession>
<comment type="function">
    <text evidence="1">Promotes mitochondrial protein synthesis. May act as a fidelity factor of the translation reaction, by catalyzing a one-codon backward translocation of tRNAs on improperly translocated ribosomes. Binds to mitochondrial ribosomes in a GTP-dependent manner.</text>
</comment>
<comment type="catalytic activity">
    <reaction evidence="1">
        <text>GTP + H2O = GDP + phosphate + H(+)</text>
        <dbReference type="Rhea" id="RHEA:19669"/>
        <dbReference type="ChEBI" id="CHEBI:15377"/>
        <dbReference type="ChEBI" id="CHEBI:15378"/>
        <dbReference type="ChEBI" id="CHEBI:37565"/>
        <dbReference type="ChEBI" id="CHEBI:43474"/>
        <dbReference type="ChEBI" id="CHEBI:58189"/>
    </reaction>
</comment>
<comment type="subcellular location">
    <subcellularLocation>
        <location evidence="1">Mitochondrion inner membrane</location>
        <topology evidence="1">Peripheral membrane protein</topology>
        <orientation evidence="1">Matrix side</orientation>
    </subcellularLocation>
</comment>
<comment type="miscellaneous">
    <text evidence="1">This protein may be expected to contain an N-terminal transit peptide but none has been predicted.</text>
</comment>
<comment type="similarity">
    <text evidence="3">Belongs to the TRAFAC class translation factor GTPase superfamily. Classic translation factor GTPase family. LepA subfamily.</text>
</comment>
<sequence>MIHAWAIKRALCIFILINCVLKLERSLKVTWKSKRGFHTPVDGANGCEREWKRRGVFFSIRRGSNRKAARLRKAFRGVGTGGRPLFRGGKFIPLFLLRDCQRSGLNENQYKLTGRRCSSRLEVAPRRGNGLPFERRSGGAIGATGQLEDGGPDGGSPPGVQANTSRRSHSSGCSSSGSDGGGAPEHPQQNVRNFCILAHIDSGKSTLADRFLELTKTIKKKKMQDQFLDMMSLEREKGITIKLKAVRMNYQNYIFNLIDTPGHFDFYHEVKRSLSVCEGAILLIDGSKGIQSQTLNIFLELQKHNLKIIPVINKIDLNVCRLDEIETDLLSKFHFMKKDILHISAKYAQGVESLFQRIVSDIPCPAIKSNAFFRAIVFDSFYDQYKGVILIIKVLNGVLTKKTEVFFIQSEKTSIIQEVGYLTPDMKPTESIRQGDIAYVSCNMRKCDDVQISETIVSRDIVKMNAHRKLVVDLDRLGGERTGEAHTNVTRCGVESLRGAAPPVEMHTEREIHLEQMAASKVDVSYPVVFCNIYSVSDKQANELEAALNKLKLNDASFSFKPDVCETLGKGFKCGFNGLLHLNIIQERIKREYGVETIVTAPSVNYLVRVKERGIDKQLRERLVDARFDIAHVNVAAGGSGDGRADGSADGSADGSADGSGDSSAHGSSDRRGAGCARGSDDIIGNNPPEGLYYMTSNVNDIPQKNYVQGIYEPYVRTSIVTPEEYQKHIMAECFQRRGIFIKKENINSHVIFHFDMPLSEILINFLDQIKSCTKGYGSMSYESYITYRESDLHKINIYVNNRSIDSLSFLAHKLNYQEKGKRIVLKLKEMIKPHQFLVVIQAGVGTRIFASERINPIRKNVTAKCYGGDITRRRKLLEKQSAGKKKMFSIGKVKLPPNMFTKLFDLKAQ</sequence>
<reference key="1">
    <citation type="journal article" date="2008" name="Nature">
        <title>Comparative genomics of the neglected human malaria parasite Plasmodium vivax.</title>
        <authorList>
            <person name="Carlton J.M."/>
            <person name="Adams J.H."/>
            <person name="Silva J.C."/>
            <person name="Bidwell S.L."/>
            <person name="Lorenzi H."/>
            <person name="Caler E."/>
            <person name="Crabtree J."/>
            <person name="Angiuoli S.V."/>
            <person name="Merino E.F."/>
            <person name="Amedeo P."/>
            <person name="Cheng Q."/>
            <person name="Coulson R.M.R."/>
            <person name="Crabb B.S."/>
            <person name="del Portillo H.A."/>
            <person name="Essien K."/>
            <person name="Feldblyum T.V."/>
            <person name="Fernandez-Becerra C."/>
            <person name="Gilson P.R."/>
            <person name="Gueye A.H."/>
            <person name="Guo X."/>
            <person name="Kang'a S."/>
            <person name="Kooij T.W.A."/>
            <person name="Korsinczky M."/>
            <person name="Meyer E.V.-S."/>
            <person name="Nene V."/>
            <person name="Paulsen I."/>
            <person name="White O."/>
            <person name="Ralph S.A."/>
            <person name="Ren Q."/>
            <person name="Sargeant T.J."/>
            <person name="Salzberg S.L."/>
            <person name="Stoeckert C.J."/>
            <person name="Sullivan S.A."/>
            <person name="Yamamoto M.M."/>
            <person name="Hoffman S.L."/>
            <person name="Wortman J.R."/>
            <person name="Gardner M.J."/>
            <person name="Galinski M.R."/>
            <person name="Barnwell J.W."/>
            <person name="Fraser-Liggett C.M."/>
        </authorList>
    </citation>
    <scope>NUCLEOTIDE SEQUENCE [LARGE SCALE GENOMIC DNA]</scope>
    <source>
        <strain>Salvador I</strain>
    </source>
</reference>